<evidence type="ECO:0000255" key="1">
    <source>
        <dbReference type="HAMAP-Rule" id="MF_00193"/>
    </source>
</evidence>
<name>NADE_PSE14</name>
<dbReference type="EC" id="6.3.1.5" evidence="1"/>
<dbReference type="EMBL" id="CP000058">
    <property type="protein sequence ID" value="AAZ36163.1"/>
    <property type="molecule type" value="Genomic_DNA"/>
</dbReference>
<dbReference type="RefSeq" id="WP_004654655.1">
    <property type="nucleotide sequence ID" value="NC_005773.3"/>
</dbReference>
<dbReference type="SMR" id="Q48NY2"/>
<dbReference type="GeneID" id="69857649"/>
<dbReference type="KEGG" id="psp:PSPPH_0587"/>
<dbReference type="eggNOG" id="COG0171">
    <property type="taxonomic scope" value="Bacteria"/>
</dbReference>
<dbReference type="HOGENOM" id="CLU_059327_3_0_6"/>
<dbReference type="UniPathway" id="UPA00253">
    <property type="reaction ID" value="UER00333"/>
</dbReference>
<dbReference type="Proteomes" id="UP000000551">
    <property type="component" value="Chromosome"/>
</dbReference>
<dbReference type="GO" id="GO:0005737">
    <property type="term" value="C:cytoplasm"/>
    <property type="evidence" value="ECO:0007669"/>
    <property type="project" value="InterPro"/>
</dbReference>
<dbReference type="GO" id="GO:0005524">
    <property type="term" value="F:ATP binding"/>
    <property type="evidence" value="ECO:0007669"/>
    <property type="project" value="UniProtKB-UniRule"/>
</dbReference>
<dbReference type="GO" id="GO:0004359">
    <property type="term" value="F:glutaminase activity"/>
    <property type="evidence" value="ECO:0007669"/>
    <property type="project" value="InterPro"/>
</dbReference>
<dbReference type="GO" id="GO:0046872">
    <property type="term" value="F:metal ion binding"/>
    <property type="evidence" value="ECO:0007669"/>
    <property type="project" value="UniProtKB-KW"/>
</dbReference>
<dbReference type="GO" id="GO:0003952">
    <property type="term" value="F:NAD+ synthase (glutamine-hydrolyzing) activity"/>
    <property type="evidence" value="ECO:0007669"/>
    <property type="project" value="InterPro"/>
</dbReference>
<dbReference type="GO" id="GO:0008795">
    <property type="term" value="F:NAD+ synthase activity"/>
    <property type="evidence" value="ECO:0007669"/>
    <property type="project" value="UniProtKB-UniRule"/>
</dbReference>
<dbReference type="GO" id="GO:0009435">
    <property type="term" value="P:NAD biosynthetic process"/>
    <property type="evidence" value="ECO:0007669"/>
    <property type="project" value="UniProtKB-UniRule"/>
</dbReference>
<dbReference type="CDD" id="cd00553">
    <property type="entry name" value="NAD_synthase"/>
    <property type="match status" value="1"/>
</dbReference>
<dbReference type="Gene3D" id="3.40.50.620">
    <property type="entry name" value="HUPs"/>
    <property type="match status" value="1"/>
</dbReference>
<dbReference type="HAMAP" id="MF_00193">
    <property type="entry name" value="NadE_ammonia_dep"/>
    <property type="match status" value="1"/>
</dbReference>
<dbReference type="InterPro" id="IPR022310">
    <property type="entry name" value="NAD/GMP_synthase"/>
</dbReference>
<dbReference type="InterPro" id="IPR003694">
    <property type="entry name" value="NAD_synthase"/>
</dbReference>
<dbReference type="InterPro" id="IPR022926">
    <property type="entry name" value="NH(3)-dep_NAD(+)_synth"/>
</dbReference>
<dbReference type="InterPro" id="IPR014729">
    <property type="entry name" value="Rossmann-like_a/b/a_fold"/>
</dbReference>
<dbReference type="NCBIfam" id="TIGR00552">
    <property type="entry name" value="nadE"/>
    <property type="match status" value="1"/>
</dbReference>
<dbReference type="NCBIfam" id="NF001979">
    <property type="entry name" value="PRK00768.1"/>
    <property type="match status" value="1"/>
</dbReference>
<dbReference type="PANTHER" id="PTHR23090">
    <property type="entry name" value="NH 3 /GLUTAMINE-DEPENDENT NAD + SYNTHETASE"/>
    <property type="match status" value="1"/>
</dbReference>
<dbReference type="PANTHER" id="PTHR23090:SF7">
    <property type="entry name" value="NH(3)-DEPENDENT NAD(+) SYNTHETASE"/>
    <property type="match status" value="1"/>
</dbReference>
<dbReference type="Pfam" id="PF02540">
    <property type="entry name" value="NAD_synthase"/>
    <property type="match status" value="1"/>
</dbReference>
<dbReference type="SUPFAM" id="SSF52402">
    <property type="entry name" value="Adenine nucleotide alpha hydrolases-like"/>
    <property type="match status" value="1"/>
</dbReference>
<feature type="chain" id="PRO_1000077580" description="NH(3)-dependent NAD(+) synthetase">
    <location>
        <begin position="1"/>
        <end position="275"/>
    </location>
</feature>
<feature type="binding site" evidence="1">
    <location>
        <begin position="50"/>
        <end position="57"/>
    </location>
    <ligand>
        <name>ATP</name>
        <dbReference type="ChEBI" id="CHEBI:30616"/>
    </ligand>
</feature>
<feature type="binding site" evidence="1">
    <location>
        <position position="56"/>
    </location>
    <ligand>
        <name>Mg(2+)</name>
        <dbReference type="ChEBI" id="CHEBI:18420"/>
    </ligand>
</feature>
<feature type="binding site" evidence="1">
    <location>
        <position position="147"/>
    </location>
    <ligand>
        <name>deamido-NAD(+)</name>
        <dbReference type="ChEBI" id="CHEBI:58437"/>
    </ligand>
</feature>
<feature type="binding site" evidence="1">
    <location>
        <position position="167"/>
    </location>
    <ligand>
        <name>ATP</name>
        <dbReference type="ChEBI" id="CHEBI:30616"/>
    </ligand>
</feature>
<feature type="binding site" evidence="1">
    <location>
        <position position="172"/>
    </location>
    <ligand>
        <name>Mg(2+)</name>
        <dbReference type="ChEBI" id="CHEBI:18420"/>
    </ligand>
</feature>
<feature type="binding site" evidence="1">
    <location>
        <position position="180"/>
    </location>
    <ligand>
        <name>deamido-NAD(+)</name>
        <dbReference type="ChEBI" id="CHEBI:58437"/>
    </ligand>
</feature>
<feature type="binding site" evidence="1">
    <location>
        <position position="187"/>
    </location>
    <ligand>
        <name>deamido-NAD(+)</name>
        <dbReference type="ChEBI" id="CHEBI:58437"/>
    </ligand>
</feature>
<feature type="binding site" evidence="1">
    <location>
        <position position="196"/>
    </location>
    <ligand>
        <name>ATP</name>
        <dbReference type="ChEBI" id="CHEBI:30616"/>
    </ligand>
</feature>
<feature type="binding site" evidence="1">
    <location>
        <position position="218"/>
    </location>
    <ligand>
        <name>ATP</name>
        <dbReference type="ChEBI" id="CHEBI:30616"/>
    </ligand>
</feature>
<feature type="binding site" evidence="1">
    <location>
        <begin position="267"/>
        <end position="268"/>
    </location>
    <ligand>
        <name>deamido-NAD(+)</name>
        <dbReference type="ChEBI" id="CHEBI:58437"/>
    </ligand>
</feature>
<reference key="1">
    <citation type="journal article" date="2005" name="J. Bacteriol.">
        <title>Whole-genome sequence analysis of Pseudomonas syringae pv. phaseolicola 1448A reveals divergence among pathovars in genes involved in virulence and transposition.</title>
        <authorList>
            <person name="Joardar V."/>
            <person name="Lindeberg M."/>
            <person name="Jackson R.W."/>
            <person name="Selengut J."/>
            <person name="Dodson R."/>
            <person name="Brinkac L.M."/>
            <person name="Daugherty S.C."/>
            <person name="DeBoy R.T."/>
            <person name="Durkin A.S."/>
            <person name="Gwinn Giglio M."/>
            <person name="Madupu R."/>
            <person name="Nelson W.C."/>
            <person name="Rosovitz M.J."/>
            <person name="Sullivan S.A."/>
            <person name="Crabtree J."/>
            <person name="Creasy T."/>
            <person name="Davidsen T.M."/>
            <person name="Haft D.H."/>
            <person name="Zafar N."/>
            <person name="Zhou L."/>
            <person name="Halpin R."/>
            <person name="Holley T."/>
            <person name="Khouri H.M."/>
            <person name="Feldblyum T.V."/>
            <person name="White O."/>
            <person name="Fraser C.M."/>
            <person name="Chatterjee A.K."/>
            <person name="Cartinhour S."/>
            <person name="Schneider D."/>
            <person name="Mansfield J.W."/>
            <person name="Collmer A."/>
            <person name="Buell R."/>
        </authorList>
    </citation>
    <scope>NUCLEOTIDE SEQUENCE [LARGE SCALE GENOMIC DNA]</scope>
    <source>
        <strain>1448A / Race 6</strain>
    </source>
</reference>
<accession>Q48NY2</accession>
<organism>
    <name type="scientific">Pseudomonas savastanoi pv. phaseolicola (strain 1448A / Race 6)</name>
    <name type="common">Pseudomonas syringae pv. phaseolicola (strain 1448A / Race 6)</name>
    <dbReference type="NCBI Taxonomy" id="264730"/>
    <lineage>
        <taxon>Bacteria</taxon>
        <taxon>Pseudomonadati</taxon>
        <taxon>Pseudomonadota</taxon>
        <taxon>Gammaproteobacteria</taxon>
        <taxon>Pseudomonadales</taxon>
        <taxon>Pseudomonadaceae</taxon>
        <taxon>Pseudomonas</taxon>
    </lineage>
</organism>
<gene>
    <name evidence="1" type="primary">nadE</name>
    <name type="ordered locus">PSPPH_0587</name>
</gene>
<protein>
    <recommendedName>
        <fullName evidence="1">NH(3)-dependent NAD(+) synthetase</fullName>
        <ecNumber evidence="1">6.3.1.5</ecNumber>
    </recommendedName>
</protein>
<sequence length="275" mass="29772">MHAVQRQIAEQLKVQPPFADQNALQAEVARRVSFIKECLQNARLKTLVLGISGGVDSLTAGLLAQRAVKELRASTGDNSYRFIAVRLPYVVQADEHEAQASVDFIEPDERHTINIGSSVKALAAEVKAFDGLPASSVDFVLGNTKARMRMVAQYTVAGAYQGLVIGTDHAAEAVMGFFTKFGDGACDLAPLSGLVKNQVRAIARHFGAPESLVEKVPTADLEDLSPGKPDEASHGVTYAEIDAFLHGEPVREEAFKIICETYAKTQHKRELPYAP</sequence>
<keyword id="KW-0067">ATP-binding</keyword>
<keyword id="KW-0436">Ligase</keyword>
<keyword id="KW-0460">Magnesium</keyword>
<keyword id="KW-0479">Metal-binding</keyword>
<keyword id="KW-0520">NAD</keyword>
<keyword id="KW-0547">Nucleotide-binding</keyword>
<proteinExistence type="inferred from homology"/>
<comment type="function">
    <text evidence="1">Catalyzes the ATP-dependent amidation of deamido-NAD to form NAD. Uses ammonia as a nitrogen source.</text>
</comment>
<comment type="catalytic activity">
    <reaction evidence="1">
        <text>deamido-NAD(+) + NH4(+) + ATP = AMP + diphosphate + NAD(+) + H(+)</text>
        <dbReference type="Rhea" id="RHEA:21188"/>
        <dbReference type="ChEBI" id="CHEBI:15378"/>
        <dbReference type="ChEBI" id="CHEBI:28938"/>
        <dbReference type="ChEBI" id="CHEBI:30616"/>
        <dbReference type="ChEBI" id="CHEBI:33019"/>
        <dbReference type="ChEBI" id="CHEBI:57540"/>
        <dbReference type="ChEBI" id="CHEBI:58437"/>
        <dbReference type="ChEBI" id="CHEBI:456215"/>
        <dbReference type="EC" id="6.3.1.5"/>
    </reaction>
</comment>
<comment type="pathway">
    <text evidence="1">Cofactor biosynthesis; NAD(+) biosynthesis; NAD(+) from deamido-NAD(+) (ammonia route): step 1/1.</text>
</comment>
<comment type="subunit">
    <text evidence="1">Homodimer.</text>
</comment>
<comment type="similarity">
    <text evidence="1">Belongs to the NAD synthetase family.</text>
</comment>